<feature type="chain" id="PRO_1000200945" description="HTH-type transcriptional activator RhaR">
    <location>
        <begin position="1"/>
        <end position="290"/>
    </location>
</feature>
<feature type="domain" description="HTH araC/xylS-type" evidence="1">
    <location>
        <begin position="179"/>
        <end position="277"/>
    </location>
</feature>
<feature type="DNA-binding region" description="H-T-H motif" evidence="1">
    <location>
        <begin position="196"/>
        <end position="217"/>
    </location>
</feature>
<feature type="DNA-binding region" description="H-T-H motif" evidence="1">
    <location>
        <begin position="244"/>
        <end position="267"/>
    </location>
</feature>
<feature type="site" description="Interaction with sigma-70" evidence="1">
    <location>
        <position position="246"/>
    </location>
</feature>
<reference key="1">
    <citation type="journal article" date="2010" name="J. Bacteriol.">
        <title>Genome sequence of the deep-rooted Yersinia pestis strain Angola reveals new insights into the evolution and pangenome of the plague bacterium.</title>
        <authorList>
            <person name="Eppinger M."/>
            <person name="Worsham P.L."/>
            <person name="Nikolich M.P."/>
            <person name="Riley D.R."/>
            <person name="Sebastian Y."/>
            <person name="Mou S."/>
            <person name="Achtman M."/>
            <person name="Lindler L.E."/>
            <person name="Ravel J."/>
        </authorList>
    </citation>
    <scope>NUCLEOTIDE SEQUENCE [LARGE SCALE GENOMIC DNA]</scope>
    <source>
        <strain>Angola</strain>
    </source>
</reference>
<dbReference type="EMBL" id="CP000901">
    <property type="protein sequence ID" value="ABX87486.1"/>
    <property type="molecule type" value="Genomic_DNA"/>
</dbReference>
<dbReference type="RefSeq" id="WP_002209110.1">
    <property type="nucleotide sequence ID" value="NZ_CP009935.1"/>
</dbReference>
<dbReference type="SMR" id="A9QYR6"/>
<dbReference type="GeneID" id="57974272"/>
<dbReference type="KEGG" id="ypg:YpAngola_A0738"/>
<dbReference type="PATRIC" id="fig|349746.12.peg.1687"/>
<dbReference type="GO" id="GO:0005737">
    <property type="term" value="C:cytoplasm"/>
    <property type="evidence" value="ECO:0007669"/>
    <property type="project" value="UniProtKB-SubCell"/>
</dbReference>
<dbReference type="GO" id="GO:0003700">
    <property type="term" value="F:DNA-binding transcription factor activity"/>
    <property type="evidence" value="ECO:0007669"/>
    <property type="project" value="UniProtKB-UniRule"/>
</dbReference>
<dbReference type="GO" id="GO:0043565">
    <property type="term" value="F:sequence-specific DNA binding"/>
    <property type="evidence" value="ECO:0007669"/>
    <property type="project" value="InterPro"/>
</dbReference>
<dbReference type="GO" id="GO:0045893">
    <property type="term" value="P:positive regulation of DNA-templated transcription"/>
    <property type="evidence" value="ECO:0007669"/>
    <property type="project" value="UniProtKB-UniRule"/>
</dbReference>
<dbReference type="GO" id="GO:0019299">
    <property type="term" value="P:rhamnose metabolic process"/>
    <property type="evidence" value="ECO:0007669"/>
    <property type="project" value="UniProtKB-UniRule"/>
</dbReference>
<dbReference type="CDD" id="cd06977">
    <property type="entry name" value="cupin_RhaR_RhaS-like_N"/>
    <property type="match status" value="1"/>
</dbReference>
<dbReference type="Gene3D" id="1.10.10.60">
    <property type="entry name" value="Homeodomain-like"/>
    <property type="match status" value="1"/>
</dbReference>
<dbReference type="Gene3D" id="2.60.120.10">
    <property type="entry name" value="Jelly Rolls"/>
    <property type="match status" value="1"/>
</dbReference>
<dbReference type="HAMAP" id="MF_01533">
    <property type="entry name" value="HTH_type_RhaR"/>
    <property type="match status" value="1"/>
</dbReference>
<dbReference type="InterPro" id="IPR003313">
    <property type="entry name" value="AraC-bd"/>
</dbReference>
<dbReference type="InterPro" id="IPR009057">
    <property type="entry name" value="Homeodomain-like_sf"/>
</dbReference>
<dbReference type="InterPro" id="IPR018060">
    <property type="entry name" value="HTH_AraC"/>
</dbReference>
<dbReference type="InterPro" id="IPR018062">
    <property type="entry name" value="HTH_AraC-typ_CS"/>
</dbReference>
<dbReference type="InterPro" id="IPR047220">
    <property type="entry name" value="RhaR_RhaS-like_N"/>
</dbReference>
<dbReference type="InterPro" id="IPR014710">
    <property type="entry name" value="RmlC-like_jellyroll"/>
</dbReference>
<dbReference type="InterPro" id="IPR011051">
    <property type="entry name" value="RmlC_Cupin_sf"/>
</dbReference>
<dbReference type="InterPro" id="IPR023699">
    <property type="entry name" value="Tscrpt_act_RhaR"/>
</dbReference>
<dbReference type="InterPro" id="IPR020449">
    <property type="entry name" value="Tscrpt_reg_AraC-type_HTH"/>
</dbReference>
<dbReference type="NCBIfam" id="NF010026">
    <property type="entry name" value="PRK13501.1"/>
    <property type="match status" value="1"/>
</dbReference>
<dbReference type="PANTHER" id="PTHR43280">
    <property type="entry name" value="ARAC-FAMILY TRANSCRIPTIONAL REGULATOR"/>
    <property type="match status" value="1"/>
</dbReference>
<dbReference type="PANTHER" id="PTHR43280:SF13">
    <property type="entry name" value="HTH-TYPE TRANSCRIPTIONAL ACTIVATOR RHAR"/>
    <property type="match status" value="1"/>
</dbReference>
<dbReference type="Pfam" id="PF02311">
    <property type="entry name" value="AraC_binding"/>
    <property type="match status" value="1"/>
</dbReference>
<dbReference type="Pfam" id="PF12833">
    <property type="entry name" value="HTH_18"/>
    <property type="match status" value="1"/>
</dbReference>
<dbReference type="PRINTS" id="PR00032">
    <property type="entry name" value="HTHARAC"/>
</dbReference>
<dbReference type="SMART" id="SM00342">
    <property type="entry name" value="HTH_ARAC"/>
    <property type="match status" value="1"/>
</dbReference>
<dbReference type="SUPFAM" id="SSF46689">
    <property type="entry name" value="Homeodomain-like"/>
    <property type="match status" value="1"/>
</dbReference>
<dbReference type="SUPFAM" id="SSF51182">
    <property type="entry name" value="RmlC-like cupins"/>
    <property type="match status" value="1"/>
</dbReference>
<dbReference type="PROSITE" id="PS00041">
    <property type="entry name" value="HTH_ARAC_FAMILY_1"/>
    <property type="match status" value="1"/>
</dbReference>
<dbReference type="PROSITE" id="PS01124">
    <property type="entry name" value="HTH_ARAC_FAMILY_2"/>
    <property type="match status" value="1"/>
</dbReference>
<sequence length="290" mass="33775">MRAPLLLESRDYLLSEQMPVAVTNRYPQETFVEHTHQFCEIVIVWRGNGLHVLNDHPYRITCGDVFYIQAADHHSYESVHDLVLDNIIYCPERLHLNAQWHKLLPPLGPEQNQGYWRLTTQGMAQARPIIQQLAQESRKTDSWSIQLTEVLLLQLAIVLKRHRYRAEQAHLLPDGEQLDLIMSALQQSLGAYFDMADFCHKNQLVERSLKQLFRQQTGMSISHYLRQIRLCHAKCLLRGSEHRISDIAARCGFEDSNYFSAVFTREAGMTPRDYRQRFIRSPVLPAKNEP</sequence>
<protein>
    <recommendedName>
        <fullName evidence="1">HTH-type transcriptional activator RhaR</fullName>
    </recommendedName>
    <alternativeName>
        <fullName evidence="1">L-rhamnose operon transcriptional activator RhaR</fullName>
    </alternativeName>
</protein>
<comment type="function">
    <text evidence="1">Activates expression of the rhaSR operon in response to L-rhamnose.</text>
</comment>
<comment type="subunit">
    <text evidence="1">Binds DNA as a dimer.</text>
</comment>
<comment type="subcellular location">
    <subcellularLocation>
        <location evidence="1">Cytoplasm</location>
    </subcellularLocation>
</comment>
<keyword id="KW-0010">Activator</keyword>
<keyword id="KW-0963">Cytoplasm</keyword>
<keyword id="KW-0238">DNA-binding</keyword>
<keyword id="KW-0677">Repeat</keyword>
<keyword id="KW-0684">Rhamnose metabolism</keyword>
<keyword id="KW-0804">Transcription</keyword>
<keyword id="KW-0805">Transcription regulation</keyword>
<accession>A9QYR6</accession>
<proteinExistence type="inferred from homology"/>
<organism>
    <name type="scientific">Yersinia pestis bv. Antiqua (strain Angola)</name>
    <dbReference type="NCBI Taxonomy" id="349746"/>
    <lineage>
        <taxon>Bacteria</taxon>
        <taxon>Pseudomonadati</taxon>
        <taxon>Pseudomonadota</taxon>
        <taxon>Gammaproteobacteria</taxon>
        <taxon>Enterobacterales</taxon>
        <taxon>Yersiniaceae</taxon>
        <taxon>Yersinia</taxon>
    </lineage>
</organism>
<name>RHAR_YERPG</name>
<gene>
    <name evidence="1" type="primary">rhaR</name>
    <name type="ordered locus">YpAngola_A0738</name>
</gene>
<evidence type="ECO:0000255" key="1">
    <source>
        <dbReference type="HAMAP-Rule" id="MF_01533"/>
    </source>
</evidence>